<keyword id="KW-0312">Gluconeogenesis</keyword>
<keyword id="KW-0324">Glycolysis</keyword>
<keyword id="KW-0413">Isomerase</keyword>
<protein>
    <recommendedName>
        <fullName evidence="1">2,3-bisphosphoglycerate-dependent phosphoglycerate mutase</fullName>
        <shortName evidence="1">BPG-dependent PGAM</shortName>
        <shortName evidence="1">PGAM</shortName>
        <shortName evidence="1">Phosphoglyceromutase</shortName>
        <shortName evidence="1">dPGM</shortName>
        <ecNumber evidence="1">5.4.2.11</ecNumber>
    </recommendedName>
</protein>
<evidence type="ECO:0000255" key="1">
    <source>
        <dbReference type="HAMAP-Rule" id="MF_01039"/>
    </source>
</evidence>
<organism>
    <name type="scientific">Bacillus anthracis (strain A0248)</name>
    <dbReference type="NCBI Taxonomy" id="592021"/>
    <lineage>
        <taxon>Bacteria</taxon>
        <taxon>Bacillati</taxon>
        <taxon>Bacillota</taxon>
        <taxon>Bacilli</taxon>
        <taxon>Bacillales</taxon>
        <taxon>Bacillaceae</taxon>
        <taxon>Bacillus</taxon>
        <taxon>Bacillus cereus group</taxon>
    </lineage>
</organism>
<gene>
    <name evidence="1" type="primary">gpmA</name>
    <name type="ordered locus">BAA_2544</name>
</gene>
<comment type="function">
    <text evidence="1">Catalyzes the interconversion of 2-phosphoglycerate and 3-phosphoglycerate.</text>
</comment>
<comment type="catalytic activity">
    <reaction evidence="1">
        <text>(2R)-2-phosphoglycerate = (2R)-3-phosphoglycerate</text>
        <dbReference type="Rhea" id="RHEA:15901"/>
        <dbReference type="ChEBI" id="CHEBI:58272"/>
        <dbReference type="ChEBI" id="CHEBI:58289"/>
        <dbReference type="EC" id="5.4.2.11"/>
    </reaction>
</comment>
<comment type="pathway">
    <text evidence="1">Carbohydrate degradation; glycolysis; pyruvate from D-glyceraldehyde 3-phosphate: step 3/5.</text>
</comment>
<comment type="similarity">
    <text evidence="1">Belongs to the phosphoglycerate mutase family. BPG-dependent PGAM subfamily.</text>
</comment>
<dbReference type="EC" id="5.4.2.11" evidence="1"/>
<dbReference type="EMBL" id="CP001598">
    <property type="protein sequence ID" value="ACQ49263.1"/>
    <property type="molecule type" value="Genomic_DNA"/>
</dbReference>
<dbReference type="RefSeq" id="WP_000594139.1">
    <property type="nucleotide sequence ID" value="NC_012659.1"/>
</dbReference>
<dbReference type="SMR" id="C3PAW8"/>
<dbReference type="GeneID" id="45022358"/>
<dbReference type="KEGG" id="bai:BAA_2544"/>
<dbReference type="HOGENOM" id="CLU_033323_1_1_9"/>
<dbReference type="UniPathway" id="UPA00109">
    <property type="reaction ID" value="UER00186"/>
</dbReference>
<dbReference type="GO" id="GO:0004619">
    <property type="term" value="F:phosphoglycerate mutase activity"/>
    <property type="evidence" value="ECO:0007669"/>
    <property type="project" value="UniProtKB-EC"/>
</dbReference>
<dbReference type="GO" id="GO:0006094">
    <property type="term" value="P:gluconeogenesis"/>
    <property type="evidence" value="ECO:0007669"/>
    <property type="project" value="UniProtKB-UniRule"/>
</dbReference>
<dbReference type="GO" id="GO:0006096">
    <property type="term" value="P:glycolytic process"/>
    <property type="evidence" value="ECO:0007669"/>
    <property type="project" value="UniProtKB-UniRule"/>
</dbReference>
<dbReference type="CDD" id="cd07067">
    <property type="entry name" value="HP_PGM_like"/>
    <property type="match status" value="1"/>
</dbReference>
<dbReference type="FunFam" id="3.40.50.1240:FF:000003">
    <property type="entry name" value="2,3-bisphosphoglycerate-dependent phosphoglycerate mutase"/>
    <property type="match status" value="1"/>
</dbReference>
<dbReference type="Gene3D" id="3.40.50.1240">
    <property type="entry name" value="Phosphoglycerate mutase-like"/>
    <property type="match status" value="1"/>
</dbReference>
<dbReference type="HAMAP" id="MF_01039">
    <property type="entry name" value="PGAM_GpmA"/>
    <property type="match status" value="1"/>
</dbReference>
<dbReference type="InterPro" id="IPR013078">
    <property type="entry name" value="His_Pase_superF_clade-1"/>
</dbReference>
<dbReference type="InterPro" id="IPR029033">
    <property type="entry name" value="His_PPase_superfam"/>
</dbReference>
<dbReference type="InterPro" id="IPR001345">
    <property type="entry name" value="PG/BPGM_mutase_AS"/>
</dbReference>
<dbReference type="InterPro" id="IPR005952">
    <property type="entry name" value="Phosphogly_mut1"/>
</dbReference>
<dbReference type="NCBIfam" id="TIGR01258">
    <property type="entry name" value="pgm_1"/>
    <property type="match status" value="1"/>
</dbReference>
<dbReference type="NCBIfam" id="NF010713">
    <property type="entry name" value="PRK14115.1"/>
    <property type="match status" value="1"/>
</dbReference>
<dbReference type="PANTHER" id="PTHR11931">
    <property type="entry name" value="PHOSPHOGLYCERATE MUTASE"/>
    <property type="match status" value="1"/>
</dbReference>
<dbReference type="Pfam" id="PF00300">
    <property type="entry name" value="His_Phos_1"/>
    <property type="match status" value="1"/>
</dbReference>
<dbReference type="PIRSF" id="PIRSF000709">
    <property type="entry name" value="6PFK_2-Ptase"/>
    <property type="match status" value="1"/>
</dbReference>
<dbReference type="SMART" id="SM00855">
    <property type="entry name" value="PGAM"/>
    <property type="match status" value="1"/>
</dbReference>
<dbReference type="SUPFAM" id="SSF53254">
    <property type="entry name" value="Phosphoglycerate mutase-like"/>
    <property type="match status" value="1"/>
</dbReference>
<dbReference type="PROSITE" id="PS00175">
    <property type="entry name" value="PG_MUTASE"/>
    <property type="match status" value="1"/>
</dbReference>
<accession>C3PAW8</accession>
<proteinExistence type="inferred from homology"/>
<reference key="1">
    <citation type="submission" date="2009-04" db="EMBL/GenBank/DDBJ databases">
        <title>Genome sequence of Bacillus anthracis A0248.</title>
        <authorList>
            <person name="Dodson R.J."/>
            <person name="Munk A.C."/>
            <person name="Bruce D."/>
            <person name="Detter C."/>
            <person name="Tapia R."/>
            <person name="Sutton G."/>
            <person name="Sims D."/>
            <person name="Brettin T."/>
        </authorList>
    </citation>
    <scope>NUCLEOTIDE SEQUENCE [LARGE SCALE GENOMIC DNA]</scope>
    <source>
        <strain>A0248</strain>
    </source>
</reference>
<sequence length="245" mass="28355">MIKLVLIRHGQSLWNLENRFTGWTDVDLSENGLSEAREAGAILKKNGYTFDVAYTSVLKRAIRTLWIVLHEMDLAWVPVHKCWKLNERHYGALQGLNKDETAKKYGEEQVHIWRRSIDVRPPALTEDDPRYEMNDLRYKALKKGEFPLTECLVDTEKRVLDYWHSEIAPKLKNGNKVIISSHGNTIRSLVKYLDNLSSDGVVSLNIPTSIPLVYELDENLRPIRHYYLSMDGEVPEGEIPKHITF</sequence>
<feature type="chain" id="PRO_1000149498" description="2,3-bisphosphoglycerate-dependent phosphoglycerate mutase">
    <location>
        <begin position="1"/>
        <end position="245"/>
    </location>
</feature>
<feature type="active site" description="Tele-phosphohistidine intermediate" evidence="1">
    <location>
        <position position="9"/>
    </location>
</feature>
<feature type="active site" description="Proton donor/acceptor" evidence="1">
    <location>
        <position position="87"/>
    </location>
</feature>
<feature type="binding site" evidence="1">
    <location>
        <begin position="8"/>
        <end position="15"/>
    </location>
    <ligand>
        <name>substrate</name>
    </ligand>
</feature>
<feature type="binding site" evidence="1">
    <location>
        <begin position="21"/>
        <end position="22"/>
    </location>
    <ligand>
        <name>substrate</name>
    </ligand>
</feature>
<feature type="binding site" evidence="1">
    <location>
        <position position="60"/>
    </location>
    <ligand>
        <name>substrate</name>
    </ligand>
</feature>
<feature type="binding site" evidence="1">
    <location>
        <begin position="87"/>
        <end position="90"/>
    </location>
    <ligand>
        <name>substrate</name>
    </ligand>
</feature>
<feature type="binding site" evidence="1">
    <location>
        <position position="98"/>
    </location>
    <ligand>
        <name>substrate</name>
    </ligand>
</feature>
<feature type="binding site" evidence="1">
    <location>
        <begin position="114"/>
        <end position="115"/>
    </location>
    <ligand>
        <name>substrate</name>
    </ligand>
</feature>
<feature type="binding site" evidence="1">
    <location>
        <begin position="183"/>
        <end position="184"/>
    </location>
    <ligand>
        <name>substrate</name>
    </ligand>
</feature>
<feature type="site" description="Transition state stabilizer" evidence="1">
    <location>
        <position position="182"/>
    </location>
</feature>
<name>GPMA_BACAA</name>